<feature type="chain" id="PRO_0000302402" description="Glycine cleavage system H protein">
    <location>
        <begin position="1"/>
        <end position="129"/>
    </location>
</feature>
<feature type="domain" description="Lipoyl-binding" evidence="2">
    <location>
        <begin position="23"/>
        <end position="104"/>
    </location>
</feature>
<feature type="modified residue" description="N6-lipoyllysine" evidence="1">
    <location>
        <position position="64"/>
    </location>
</feature>
<reference key="1">
    <citation type="submission" date="2005-08" db="EMBL/GenBank/DDBJ databases">
        <title>Complete sequence of chromosome 1 of Nitrosospira multiformis ATCC 25196.</title>
        <authorList>
            <person name="Copeland A."/>
            <person name="Lucas S."/>
            <person name="Lapidus A."/>
            <person name="Barry K."/>
            <person name="Detter J.C."/>
            <person name="Glavina T."/>
            <person name="Hammon N."/>
            <person name="Israni S."/>
            <person name="Pitluck S."/>
            <person name="Chain P."/>
            <person name="Malfatti S."/>
            <person name="Shin M."/>
            <person name="Vergez L."/>
            <person name="Schmutz J."/>
            <person name="Larimer F."/>
            <person name="Land M."/>
            <person name="Hauser L."/>
            <person name="Kyrpides N."/>
            <person name="Lykidis A."/>
            <person name="Richardson P."/>
        </authorList>
    </citation>
    <scope>NUCLEOTIDE SEQUENCE [LARGE SCALE GENOMIC DNA]</scope>
    <source>
        <strain>ATCC 25196 / NCIMB 11849 / C 71</strain>
    </source>
</reference>
<name>GCSH_NITMU</name>
<sequence>MSIPNDLKYTKSHEWVRLEDDGTATIGITQHAQELLGDMVFVETPAVGRQLKQGDECAVVESVKAAADVYAPITGEVTAANPELASAPEKINQDAYAAWLFRLKPANTADLEKLLDSAGYQKLLESEDH</sequence>
<protein>
    <recommendedName>
        <fullName evidence="1">Glycine cleavage system H protein</fullName>
    </recommendedName>
</protein>
<gene>
    <name evidence="1" type="primary">gcvH</name>
    <name type="ordered locus">Nmul_A0213</name>
</gene>
<evidence type="ECO:0000255" key="1">
    <source>
        <dbReference type="HAMAP-Rule" id="MF_00272"/>
    </source>
</evidence>
<evidence type="ECO:0000255" key="2">
    <source>
        <dbReference type="PROSITE-ProRule" id="PRU01066"/>
    </source>
</evidence>
<accession>Q2YCK0</accession>
<keyword id="KW-0450">Lipoyl</keyword>
<keyword id="KW-1185">Reference proteome</keyword>
<organism>
    <name type="scientific">Nitrosospira multiformis (strain ATCC 25196 / NCIMB 11849 / C 71)</name>
    <dbReference type="NCBI Taxonomy" id="323848"/>
    <lineage>
        <taxon>Bacteria</taxon>
        <taxon>Pseudomonadati</taxon>
        <taxon>Pseudomonadota</taxon>
        <taxon>Betaproteobacteria</taxon>
        <taxon>Nitrosomonadales</taxon>
        <taxon>Nitrosomonadaceae</taxon>
        <taxon>Nitrosospira</taxon>
    </lineage>
</organism>
<proteinExistence type="inferred from homology"/>
<comment type="function">
    <text evidence="1">The glycine cleavage system catalyzes the degradation of glycine. The H protein shuttles the methylamine group of glycine from the P protein to the T protein.</text>
</comment>
<comment type="cofactor">
    <cofactor evidence="1">
        <name>(R)-lipoate</name>
        <dbReference type="ChEBI" id="CHEBI:83088"/>
    </cofactor>
    <text evidence="1">Binds 1 lipoyl cofactor covalently.</text>
</comment>
<comment type="subunit">
    <text evidence="1">The glycine cleavage system is composed of four proteins: P, T, L and H.</text>
</comment>
<comment type="similarity">
    <text evidence="1">Belongs to the GcvH family.</text>
</comment>
<dbReference type="EMBL" id="CP000103">
    <property type="protein sequence ID" value="ABB73521.1"/>
    <property type="molecule type" value="Genomic_DNA"/>
</dbReference>
<dbReference type="RefSeq" id="WP_011379575.1">
    <property type="nucleotide sequence ID" value="NC_007614.1"/>
</dbReference>
<dbReference type="SMR" id="Q2YCK0"/>
<dbReference type="STRING" id="323848.Nmul_A0213"/>
<dbReference type="KEGG" id="nmu:Nmul_A0213"/>
<dbReference type="eggNOG" id="COG0509">
    <property type="taxonomic scope" value="Bacteria"/>
</dbReference>
<dbReference type="HOGENOM" id="CLU_097408_2_1_4"/>
<dbReference type="OrthoDB" id="9796712at2"/>
<dbReference type="Proteomes" id="UP000002718">
    <property type="component" value="Chromosome"/>
</dbReference>
<dbReference type="GO" id="GO:0005829">
    <property type="term" value="C:cytosol"/>
    <property type="evidence" value="ECO:0007669"/>
    <property type="project" value="TreeGrafter"/>
</dbReference>
<dbReference type="GO" id="GO:0005960">
    <property type="term" value="C:glycine cleavage complex"/>
    <property type="evidence" value="ECO:0007669"/>
    <property type="project" value="InterPro"/>
</dbReference>
<dbReference type="GO" id="GO:0019464">
    <property type="term" value="P:glycine decarboxylation via glycine cleavage system"/>
    <property type="evidence" value="ECO:0007669"/>
    <property type="project" value="UniProtKB-UniRule"/>
</dbReference>
<dbReference type="CDD" id="cd06848">
    <property type="entry name" value="GCS_H"/>
    <property type="match status" value="1"/>
</dbReference>
<dbReference type="Gene3D" id="2.40.50.100">
    <property type="match status" value="1"/>
</dbReference>
<dbReference type="HAMAP" id="MF_00272">
    <property type="entry name" value="GcvH"/>
    <property type="match status" value="1"/>
</dbReference>
<dbReference type="InterPro" id="IPR003016">
    <property type="entry name" value="2-oxoA_DH_lipoyl-BS"/>
</dbReference>
<dbReference type="InterPro" id="IPR000089">
    <property type="entry name" value="Biotin_lipoyl"/>
</dbReference>
<dbReference type="InterPro" id="IPR002930">
    <property type="entry name" value="GCV_H"/>
</dbReference>
<dbReference type="InterPro" id="IPR033753">
    <property type="entry name" value="GCV_H/Fam206"/>
</dbReference>
<dbReference type="InterPro" id="IPR017453">
    <property type="entry name" value="GCV_H_sub"/>
</dbReference>
<dbReference type="InterPro" id="IPR011053">
    <property type="entry name" value="Single_hybrid_motif"/>
</dbReference>
<dbReference type="NCBIfam" id="TIGR00527">
    <property type="entry name" value="gcvH"/>
    <property type="match status" value="1"/>
</dbReference>
<dbReference type="NCBIfam" id="NF002270">
    <property type="entry name" value="PRK01202.1"/>
    <property type="match status" value="1"/>
</dbReference>
<dbReference type="PANTHER" id="PTHR11715">
    <property type="entry name" value="GLYCINE CLEAVAGE SYSTEM H PROTEIN"/>
    <property type="match status" value="1"/>
</dbReference>
<dbReference type="PANTHER" id="PTHR11715:SF3">
    <property type="entry name" value="GLYCINE CLEAVAGE SYSTEM H PROTEIN-RELATED"/>
    <property type="match status" value="1"/>
</dbReference>
<dbReference type="Pfam" id="PF01597">
    <property type="entry name" value="GCV_H"/>
    <property type="match status" value="1"/>
</dbReference>
<dbReference type="SUPFAM" id="SSF51230">
    <property type="entry name" value="Single hybrid motif"/>
    <property type="match status" value="1"/>
</dbReference>
<dbReference type="PROSITE" id="PS50968">
    <property type="entry name" value="BIOTINYL_LIPOYL"/>
    <property type="match status" value="1"/>
</dbReference>
<dbReference type="PROSITE" id="PS00189">
    <property type="entry name" value="LIPOYL"/>
    <property type="match status" value="1"/>
</dbReference>